<dbReference type="EC" id="6.1.1.4" evidence="1"/>
<dbReference type="EMBL" id="CP000458">
    <property type="protein sequence ID" value="ABK07407.1"/>
    <property type="molecule type" value="Genomic_DNA"/>
</dbReference>
<dbReference type="RefSeq" id="WP_011544571.1">
    <property type="nucleotide sequence ID" value="NC_008542.1"/>
</dbReference>
<dbReference type="SMR" id="A0K4I0"/>
<dbReference type="KEGG" id="bch:Bcen2424_0654"/>
<dbReference type="HOGENOM" id="CLU_004427_0_0_4"/>
<dbReference type="GO" id="GO:0005829">
    <property type="term" value="C:cytosol"/>
    <property type="evidence" value="ECO:0007669"/>
    <property type="project" value="TreeGrafter"/>
</dbReference>
<dbReference type="GO" id="GO:0002161">
    <property type="term" value="F:aminoacyl-tRNA deacylase activity"/>
    <property type="evidence" value="ECO:0007669"/>
    <property type="project" value="InterPro"/>
</dbReference>
<dbReference type="GO" id="GO:0005524">
    <property type="term" value="F:ATP binding"/>
    <property type="evidence" value="ECO:0007669"/>
    <property type="project" value="UniProtKB-UniRule"/>
</dbReference>
<dbReference type="GO" id="GO:0004823">
    <property type="term" value="F:leucine-tRNA ligase activity"/>
    <property type="evidence" value="ECO:0007669"/>
    <property type="project" value="UniProtKB-UniRule"/>
</dbReference>
<dbReference type="GO" id="GO:0006429">
    <property type="term" value="P:leucyl-tRNA aminoacylation"/>
    <property type="evidence" value="ECO:0007669"/>
    <property type="project" value="UniProtKB-UniRule"/>
</dbReference>
<dbReference type="CDD" id="cd07958">
    <property type="entry name" value="Anticodon_Ia_Leu_BEm"/>
    <property type="match status" value="1"/>
</dbReference>
<dbReference type="CDD" id="cd00812">
    <property type="entry name" value="LeuRS_core"/>
    <property type="match status" value="1"/>
</dbReference>
<dbReference type="FunFam" id="1.10.730.10:FF:000002">
    <property type="entry name" value="Leucine--tRNA ligase"/>
    <property type="match status" value="1"/>
</dbReference>
<dbReference type="FunFam" id="2.20.28.290:FF:000001">
    <property type="entry name" value="Leucine--tRNA ligase"/>
    <property type="match status" value="1"/>
</dbReference>
<dbReference type="FunFam" id="3.10.20.590:FF:000001">
    <property type="entry name" value="Leucine--tRNA ligase"/>
    <property type="match status" value="1"/>
</dbReference>
<dbReference type="FunFam" id="3.40.50.620:FF:000003">
    <property type="entry name" value="Leucine--tRNA ligase"/>
    <property type="match status" value="1"/>
</dbReference>
<dbReference type="FunFam" id="3.40.50.620:FF:000056">
    <property type="entry name" value="Leucine--tRNA ligase"/>
    <property type="match status" value="1"/>
</dbReference>
<dbReference type="FunFam" id="3.90.740.10:FF:000012">
    <property type="entry name" value="Leucine--tRNA ligase"/>
    <property type="match status" value="1"/>
</dbReference>
<dbReference type="Gene3D" id="2.20.28.290">
    <property type="match status" value="1"/>
</dbReference>
<dbReference type="Gene3D" id="3.10.20.590">
    <property type="match status" value="1"/>
</dbReference>
<dbReference type="Gene3D" id="3.40.50.620">
    <property type="entry name" value="HUPs"/>
    <property type="match status" value="2"/>
</dbReference>
<dbReference type="Gene3D" id="1.10.730.10">
    <property type="entry name" value="Isoleucyl-tRNA Synthetase, Domain 1"/>
    <property type="match status" value="2"/>
</dbReference>
<dbReference type="HAMAP" id="MF_00049_B">
    <property type="entry name" value="Leu_tRNA_synth_B"/>
    <property type="match status" value="1"/>
</dbReference>
<dbReference type="InterPro" id="IPR001412">
    <property type="entry name" value="aa-tRNA-synth_I_CS"/>
</dbReference>
<dbReference type="InterPro" id="IPR002300">
    <property type="entry name" value="aa-tRNA-synth_Ia"/>
</dbReference>
<dbReference type="InterPro" id="IPR002302">
    <property type="entry name" value="Leu-tRNA-ligase"/>
</dbReference>
<dbReference type="InterPro" id="IPR025709">
    <property type="entry name" value="Leu_tRNA-synth_edit"/>
</dbReference>
<dbReference type="InterPro" id="IPR013155">
    <property type="entry name" value="M/V/L/I-tRNA-synth_anticd-bd"/>
</dbReference>
<dbReference type="InterPro" id="IPR015413">
    <property type="entry name" value="Methionyl/Leucyl_tRNA_Synth"/>
</dbReference>
<dbReference type="InterPro" id="IPR014729">
    <property type="entry name" value="Rossmann-like_a/b/a_fold"/>
</dbReference>
<dbReference type="InterPro" id="IPR009080">
    <property type="entry name" value="tRNAsynth_Ia_anticodon-bd"/>
</dbReference>
<dbReference type="InterPro" id="IPR009008">
    <property type="entry name" value="Val/Leu/Ile-tRNA-synth_edit"/>
</dbReference>
<dbReference type="NCBIfam" id="TIGR00396">
    <property type="entry name" value="leuS_bact"/>
    <property type="match status" value="1"/>
</dbReference>
<dbReference type="PANTHER" id="PTHR43740:SF2">
    <property type="entry name" value="LEUCINE--TRNA LIGASE, MITOCHONDRIAL"/>
    <property type="match status" value="1"/>
</dbReference>
<dbReference type="PANTHER" id="PTHR43740">
    <property type="entry name" value="LEUCYL-TRNA SYNTHETASE"/>
    <property type="match status" value="1"/>
</dbReference>
<dbReference type="Pfam" id="PF08264">
    <property type="entry name" value="Anticodon_1"/>
    <property type="match status" value="1"/>
</dbReference>
<dbReference type="Pfam" id="PF00133">
    <property type="entry name" value="tRNA-synt_1"/>
    <property type="match status" value="2"/>
</dbReference>
<dbReference type="Pfam" id="PF13603">
    <property type="entry name" value="tRNA-synt_1_2"/>
    <property type="match status" value="1"/>
</dbReference>
<dbReference type="Pfam" id="PF09334">
    <property type="entry name" value="tRNA-synt_1g"/>
    <property type="match status" value="1"/>
</dbReference>
<dbReference type="PRINTS" id="PR00985">
    <property type="entry name" value="TRNASYNTHLEU"/>
</dbReference>
<dbReference type="SUPFAM" id="SSF47323">
    <property type="entry name" value="Anticodon-binding domain of a subclass of class I aminoacyl-tRNA synthetases"/>
    <property type="match status" value="1"/>
</dbReference>
<dbReference type="SUPFAM" id="SSF52374">
    <property type="entry name" value="Nucleotidylyl transferase"/>
    <property type="match status" value="1"/>
</dbReference>
<dbReference type="SUPFAM" id="SSF50677">
    <property type="entry name" value="ValRS/IleRS/LeuRS editing domain"/>
    <property type="match status" value="1"/>
</dbReference>
<dbReference type="PROSITE" id="PS00178">
    <property type="entry name" value="AA_TRNA_LIGASE_I"/>
    <property type="match status" value="1"/>
</dbReference>
<reference key="1">
    <citation type="submission" date="2006-08" db="EMBL/GenBank/DDBJ databases">
        <title>Complete sequence of chromosome 1 of Burkholderia cenocepacia HI2424.</title>
        <authorList>
            <person name="Copeland A."/>
            <person name="Lucas S."/>
            <person name="Lapidus A."/>
            <person name="Barry K."/>
            <person name="Detter J.C."/>
            <person name="Glavina del Rio T."/>
            <person name="Hammon N."/>
            <person name="Israni S."/>
            <person name="Pitluck S."/>
            <person name="Chain P."/>
            <person name="Malfatti S."/>
            <person name="Shin M."/>
            <person name="Vergez L."/>
            <person name="Schmutz J."/>
            <person name="Larimer F."/>
            <person name="Land M."/>
            <person name="Hauser L."/>
            <person name="Kyrpides N."/>
            <person name="Kim E."/>
            <person name="LiPuma J.J."/>
            <person name="Gonzalez C.F."/>
            <person name="Konstantinidis K."/>
            <person name="Tiedje J.M."/>
            <person name="Richardson P."/>
        </authorList>
    </citation>
    <scope>NUCLEOTIDE SEQUENCE [LARGE SCALE GENOMIC DNA]</scope>
    <source>
        <strain>HI2424</strain>
    </source>
</reference>
<name>SYL_BURCH</name>
<sequence length="864" mass="96258">MHERYVPADVEAAAQGDWRAADAYKTKEDSQKPKFYCVSMLPYPSGKLHMGHVRNYTINDVMYRYLRMNGYNTLMPMGWDAFGMPAENAAMANGVPPAKWTYDNIDYMKGQMQSMGLAIDWSREIATCKPDYYKWNQWLFLKMLEKGIAYKKTGTVNWDPVDQTVLANEQVIDGRGWRSGALVEKREIPMYYLRITQYADELLNDLDGLGWPERVKIMQQNWIGKSFGVNFGFPYELDGEQKLLRVFTTRADTIMGVTFCAIAAEHPLATRLAQDKPELLAFIEECKRGGVAEADVATMEKKGVATGFSVKHPLTGEPVEVWIGNYVLMSYGEGAVMGVPGHDERDFAFAKKYDLPIRQVIASEGQTYSLDAWQEWYGDKETAVCVNSGKYDGLRYAEAVDAVAADLKAGGFGDKQVTWRLRDWGVSRQRYWGTPIPIIHCPSCGDVPVPEQDLPVVLPEDLVPDGSGNPLAKSEAFLNCTCPKCGAAAKRETDTMDTFVDSSWYFSRYTAPDAETMVDARTDYWMPMDQYIGGIEHAILHLLYSRFWTKVMRDLGLVKFGEPAKNLLTQGMVLNETYYREDAAGKKTWYNPLDVTVTHDDKGRPVGATLNADGQPVVLGGIEKMSKSKNNGVDPQLLIDQYGADTARLFTMFAAPPEQQLEWSGAGVEGASRFLRRVWSFGYGNREALAARAGFDAATLGDADKALRREIYSVLKQADFDYQRLQYNTVVSAAMKMLNAIDGAKGATPAVLRETYGVLLRVLYPVVPHVTFELWKTLGYADEFGALLDAPWPKVDEAALEQAEIELVLQVNGKVRGALKVAKDASRDAIEAAAVADEAFAKFSDGKPAKKIVVVPGRLVNIVV</sequence>
<feature type="chain" id="PRO_1000009305" description="Leucine--tRNA ligase">
    <location>
        <begin position="1"/>
        <end position="864"/>
    </location>
</feature>
<feature type="short sequence motif" description="'HIGH' region">
    <location>
        <begin position="42"/>
        <end position="52"/>
    </location>
</feature>
<feature type="short sequence motif" description="'KMSKS' region">
    <location>
        <begin position="624"/>
        <end position="628"/>
    </location>
</feature>
<feature type="binding site" evidence="1">
    <location>
        <position position="627"/>
    </location>
    <ligand>
        <name>ATP</name>
        <dbReference type="ChEBI" id="CHEBI:30616"/>
    </ligand>
</feature>
<accession>A0K4I0</accession>
<keyword id="KW-0030">Aminoacyl-tRNA synthetase</keyword>
<keyword id="KW-0067">ATP-binding</keyword>
<keyword id="KW-0963">Cytoplasm</keyword>
<keyword id="KW-0436">Ligase</keyword>
<keyword id="KW-0547">Nucleotide-binding</keyword>
<keyword id="KW-0648">Protein biosynthesis</keyword>
<proteinExistence type="inferred from homology"/>
<protein>
    <recommendedName>
        <fullName evidence="1">Leucine--tRNA ligase</fullName>
        <ecNumber evidence="1">6.1.1.4</ecNumber>
    </recommendedName>
    <alternativeName>
        <fullName evidence="1">Leucyl-tRNA synthetase</fullName>
        <shortName evidence="1">LeuRS</shortName>
    </alternativeName>
</protein>
<evidence type="ECO:0000255" key="1">
    <source>
        <dbReference type="HAMAP-Rule" id="MF_00049"/>
    </source>
</evidence>
<organism>
    <name type="scientific">Burkholderia cenocepacia (strain HI2424)</name>
    <dbReference type="NCBI Taxonomy" id="331272"/>
    <lineage>
        <taxon>Bacteria</taxon>
        <taxon>Pseudomonadati</taxon>
        <taxon>Pseudomonadota</taxon>
        <taxon>Betaproteobacteria</taxon>
        <taxon>Burkholderiales</taxon>
        <taxon>Burkholderiaceae</taxon>
        <taxon>Burkholderia</taxon>
        <taxon>Burkholderia cepacia complex</taxon>
    </lineage>
</organism>
<gene>
    <name evidence="1" type="primary">leuS</name>
    <name type="ordered locus">Bcen2424_0654</name>
</gene>
<comment type="catalytic activity">
    <reaction evidence="1">
        <text>tRNA(Leu) + L-leucine + ATP = L-leucyl-tRNA(Leu) + AMP + diphosphate</text>
        <dbReference type="Rhea" id="RHEA:11688"/>
        <dbReference type="Rhea" id="RHEA-COMP:9613"/>
        <dbReference type="Rhea" id="RHEA-COMP:9622"/>
        <dbReference type="ChEBI" id="CHEBI:30616"/>
        <dbReference type="ChEBI" id="CHEBI:33019"/>
        <dbReference type="ChEBI" id="CHEBI:57427"/>
        <dbReference type="ChEBI" id="CHEBI:78442"/>
        <dbReference type="ChEBI" id="CHEBI:78494"/>
        <dbReference type="ChEBI" id="CHEBI:456215"/>
        <dbReference type="EC" id="6.1.1.4"/>
    </reaction>
</comment>
<comment type="subcellular location">
    <subcellularLocation>
        <location evidence="1">Cytoplasm</location>
    </subcellularLocation>
</comment>
<comment type="similarity">
    <text evidence="1">Belongs to the class-I aminoacyl-tRNA synthetase family.</text>
</comment>